<keyword id="KW-0028">Amino-acid biosynthesis</keyword>
<keyword id="KW-0057">Aromatic amino acid biosynthesis</keyword>
<keyword id="KW-0210">Decarboxylase</keyword>
<keyword id="KW-0456">Lyase</keyword>
<keyword id="KW-1185">Reference proteome</keyword>
<keyword id="KW-0822">Tryptophan biosynthesis</keyword>
<accession>Q3SGS2</accession>
<sequence length="262" mass="27868">MSDILEKILATKRAEVAAGLARVPLAEMRARAEAAAPARDFVGALRAKRDAGRPAVIAEIKKASPSKGVIRADFRPAEIAASYEKGGAACLSILTDAEYFQGSADYLKAARAACTLPVLRKDFMIDAYQVYEARAMGADCILLIVAALELPAMQALEALANELGMAVLVESHDAAELDAALTLRTPLQGINNRNLRTFEVSLDTTLSLLPKIGPERIVVTESGILAPADVDTMRSRGVNTFLVGEAFMRAADPGAELARLFA</sequence>
<feature type="chain" id="PRO_1000018566" description="Indole-3-glycerol phosphate synthase">
    <location>
        <begin position="1"/>
        <end position="262"/>
    </location>
</feature>
<protein>
    <recommendedName>
        <fullName evidence="1">Indole-3-glycerol phosphate synthase</fullName>
        <shortName evidence="1">IGPS</shortName>
        <ecNumber evidence="1">4.1.1.48</ecNumber>
    </recommendedName>
</protein>
<proteinExistence type="inferred from homology"/>
<dbReference type="EC" id="4.1.1.48" evidence="1"/>
<dbReference type="EMBL" id="CP000116">
    <property type="protein sequence ID" value="AAZ98175.1"/>
    <property type="molecule type" value="Genomic_DNA"/>
</dbReference>
<dbReference type="RefSeq" id="WP_011312734.1">
    <property type="nucleotide sequence ID" value="NC_007404.1"/>
</dbReference>
<dbReference type="SMR" id="Q3SGS2"/>
<dbReference type="STRING" id="292415.Tbd_2222"/>
<dbReference type="KEGG" id="tbd:Tbd_2222"/>
<dbReference type="eggNOG" id="COG0134">
    <property type="taxonomic scope" value="Bacteria"/>
</dbReference>
<dbReference type="HOGENOM" id="CLU_034247_2_0_4"/>
<dbReference type="OrthoDB" id="9804217at2"/>
<dbReference type="UniPathway" id="UPA00035">
    <property type="reaction ID" value="UER00043"/>
</dbReference>
<dbReference type="Proteomes" id="UP000008291">
    <property type="component" value="Chromosome"/>
</dbReference>
<dbReference type="GO" id="GO:0004425">
    <property type="term" value="F:indole-3-glycerol-phosphate synthase activity"/>
    <property type="evidence" value="ECO:0007669"/>
    <property type="project" value="UniProtKB-UniRule"/>
</dbReference>
<dbReference type="GO" id="GO:0004640">
    <property type="term" value="F:phosphoribosylanthranilate isomerase activity"/>
    <property type="evidence" value="ECO:0007669"/>
    <property type="project" value="TreeGrafter"/>
</dbReference>
<dbReference type="GO" id="GO:0000162">
    <property type="term" value="P:L-tryptophan biosynthetic process"/>
    <property type="evidence" value="ECO:0007669"/>
    <property type="project" value="UniProtKB-UniRule"/>
</dbReference>
<dbReference type="CDD" id="cd00331">
    <property type="entry name" value="IGPS"/>
    <property type="match status" value="1"/>
</dbReference>
<dbReference type="FunFam" id="3.20.20.70:FF:000024">
    <property type="entry name" value="Indole-3-glycerol phosphate synthase"/>
    <property type="match status" value="1"/>
</dbReference>
<dbReference type="Gene3D" id="3.20.20.70">
    <property type="entry name" value="Aldolase class I"/>
    <property type="match status" value="1"/>
</dbReference>
<dbReference type="HAMAP" id="MF_00134_B">
    <property type="entry name" value="IGPS_B"/>
    <property type="match status" value="1"/>
</dbReference>
<dbReference type="InterPro" id="IPR013785">
    <property type="entry name" value="Aldolase_TIM"/>
</dbReference>
<dbReference type="InterPro" id="IPR045186">
    <property type="entry name" value="Indole-3-glycerol_P_synth"/>
</dbReference>
<dbReference type="InterPro" id="IPR013798">
    <property type="entry name" value="Indole-3-glycerol_P_synth_dom"/>
</dbReference>
<dbReference type="InterPro" id="IPR001468">
    <property type="entry name" value="Indole-3-GlycerolPSynthase_CS"/>
</dbReference>
<dbReference type="InterPro" id="IPR011060">
    <property type="entry name" value="RibuloseP-bd_barrel"/>
</dbReference>
<dbReference type="NCBIfam" id="NF001370">
    <property type="entry name" value="PRK00278.1-2"/>
    <property type="match status" value="1"/>
</dbReference>
<dbReference type="NCBIfam" id="NF001373">
    <property type="entry name" value="PRK00278.1-6"/>
    <property type="match status" value="1"/>
</dbReference>
<dbReference type="NCBIfam" id="NF001377">
    <property type="entry name" value="PRK00278.2-4"/>
    <property type="match status" value="1"/>
</dbReference>
<dbReference type="PANTHER" id="PTHR22854:SF2">
    <property type="entry name" value="INDOLE-3-GLYCEROL-PHOSPHATE SYNTHASE"/>
    <property type="match status" value="1"/>
</dbReference>
<dbReference type="PANTHER" id="PTHR22854">
    <property type="entry name" value="TRYPTOPHAN BIOSYNTHESIS PROTEIN"/>
    <property type="match status" value="1"/>
</dbReference>
<dbReference type="Pfam" id="PF00218">
    <property type="entry name" value="IGPS"/>
    <property type="match status" value="1"/>
</dbReference>
<dbReference type="SUPFAM" id="SSF51366">
    <property type="entry name" value="Ribulose-phoshate binding barrel"/>
    <property type="match status" value="1"/>
</dbReference>
<dbReference type="PROSITE" id="PS00614">
    <property type="entry name" value="IGPS"/>
    <property type="match status" value="1"/>
</dbReference>
<name>TRPC_THIDA</name>
<comment type="catalytic activity">
    <reaction evidence="1">
        <text>1-(2-carboxyphenylamino)-1-deoxy-D-ribulose 5-phosphate + H(+) = (1S,2R)-1-C-(indol-3-yl)glycerol 3-phosphate + CO2 + H2O</text>
        <dbReference type="Rhea" id="RHEA:23476"/>
        <dbReference type="ChEBI" id="CHEBI:15377"/>
        <dbReference type="ChEBI" id="CHEBI:15378"/>
        <dbReference type="ChEBI" id="CHEBI:16526"/>
        <dbReference type="ChEBI" id="CHEBI:58613"/>
        <dbReference type="ChEBI" id="CHEBI:58866"/>
        <dbReference type="EC" id="4.1.1.48"/>
    </reaction>
</comment>
<comment type="pathway">
    <text evidence="1">Amino-acid biosynthesis; L-tryptophan biosynthesis; L-tryptophan from chorismate: step 4/5.</text>
</comment>
<comment type="similarity">
    <text evidence="1">Belongs to the TrpC family.</text>
</comment>
<reference key="1">
    <citation type="journal article" date="2006" name="J. Bacteriol.">
        <title>The genome sequence of the obligately chemolithoautotrophic, facultatively anaerobic bacterium Thiobacillus denitrificans.</title>
        <authorList>
            <person name="Beller H.R."/>
            <person name="Chain P.S."/>
            <person name="Letain T.E."/>
            <person name="Chakicherla A."/>
            <person name="Larimer F.W."/>
            <person name="Richardson P.M."/>
            <person name="Coleman M.A."/>
            <person name="Wood A.P."/>
            <person name="Kelly D.P."/>
        </authorList>
    </citation>
    <scope>NUCLEOTIDE SEQUENCE [LARGE SCALE GENOMIC DNA]</scope>
    <source>
        <strain>ATCC 25259 / T1</strain>
    </source>
</reference>
<evidence type="ECO:0000255" key="1">
    <source>
        <dbReference type="HAMAP-Rule" id="MF_00134"/>
    </source>
</evidence>
<gene>
    <name evidence="1" type="primary">trpC</name>
    <name type="ordered locus">Tbd_2222</name>
</gene>
<organism>
    <name type="scientific">Thiobacillus denitrificans (strain ATCC 25259 / T1)</name>
    <dbReference type="NCBI Taxonomy" id="292415"/>
    <lineage>
        <taxon>Bacteria</taxon>
        <taxon>Pseudomonadati</taxon>
        <taxon>Pseudomonadota</taxon>
        <taxon>Betaproteobacteria</taxon>
        <taxon>Nitrosomonadales</taxon>
        <taxon>Thiobacillaceae</taxon>
        <taxon>Thiobacillus</taxon>
    </lineage>
</organism>